<feature type="chain" id="PRO_0000233843" description="Bifunctional protein GlmU">
    <location>
        <begin position="1"/>
        <end position="456"/>
    </location>
</feature>
<feature type="region of interest" description="Pyrophosphorylase" evidence="1">
    <location>
        <begin position="1"/>
        <end position="229"/>
    </location>
</feature>
<feature type="region of interest" description="Linker" evidence="1">
    <location>
        <begin position="230"/>
        <end position="250"/>
    </location>
</feature>
<feature type="region of interest" description="N-acetyltransferase" evidence="1">
    <location>
        <begin position="251"/>
        <end position="456"/>
    </location>
</feature>
<feature type="active site" description="Proton acceptor" evidence="1">
    <location>
        <position position="363"/>
    </location>
</feature>
<feature type="binding site" evidence="1">
    <location>
        <begin position="11"/>
        <end position="14"/>
    </location>
    <ligand>
        <name>UDP-N-acetyl-alpha-D-glucosamine</name>
        <dbReference type="ChEBI" id="CHEBI:57705"/>
    </ligand>
</feature>
<feature type="binding site" evidence="1">
    <location>
        <position position="25"/>
    </location>
    <ligand>
        <name>UDP-N-acetyl-alpha-D-glucosamine</name>
        <dbReference type="ChEBI" id="CHEBI:57705"/>
    </ligand>
</feature>
<feature type="binding site" evidence="1">
    <location>
        <position position="76"/>
    </location>
    <ligand>
        <name>UDP-N-acetyl-alpha-D-glucosamine</name>
        <dbReference type="ChEBI" id="CHEBI:57705"/>
    </ligand>
</feature>
<feature type="binding site" evidence="1">
    <location>
        <begin position="81"/>
        <end position="82"/>
    </location>
    <ligand>
        <name>UDP-N-acetyl-alpha-D-glucosamine</name>
        <dbReference type="ChEBI" id="CHEBI:57705"/>
    </ligand>
</feature>
<feature type="binding site" evidence="1">
    <location>
        <begin position="103"/>
        <end position="105"/>
    </location>
    <ligand>
        <name>UDP-N-acetyl-alpha-D-glucosamine</name>
        <dbReference type="ChEBI" id="CHEBI:57705"/>
    </ligand>
</feature>
<feature type="binding site" evidence="1">
    <location>
        <position position="105"/>
    </location>
    <ligand>
        <name>Mg(2+)</name>
        <dbReference type="ChEBI" id="CHEBI:18420"/>
    </ligand>
</feature>
<feature type="binding site" evidence="1">
    <location>
        <position position="140"/>
    </location>
    <ligand>
        <name>UDP-N-acetyl-alpha-D-glucosamine</name>
        <dbReference type="ChEBI" id="CHEBI:57705"/>
    </ligand>
</feature>
<feature type="binding site" evidence="1">
    <location>
        <position position="154"/>
    </location>
    <ligand>
        <name>UDP-N-acetyl-alpha-D-glucosamine</name>
        <dbReference type="ChEBI" id="CHEBI:57705"/>
    </ligand>
</feature>
<feature type="binding site" evidence="1">
    <location>
        <position position="169"/>
    </location>
    <ligand>
        <name>UDP-N-acetyl-alpha-D-glucosamine</name>
        <dbReference type="ChEBI" id="CHEBI:57705"/>
    </ligand>
</feature>
<feature type="binding site" evidence="1">
    <location>
        <position position="227"/>
    </location>
    <ligand>
        <name>Mg(2+)</name>
        <dbReference type="ChEBI" id="CHEBI:18420"/>
    </ligand>
</feature>
<feature type="binding site" evidence="1">
    <location>
        <position position="227"/>
    </location>
    <ligand>
        <name>UDP-N-acetyl-alpha-D-glucosamine</name>
        <dbReference type="ChEBI" id="CHEBI:57705"/>
    </ligand>
</feature>
<feature type="binding site" evidence="1">
    <location>
        <position position="333"/>
    </location>
    <ligand>
        <name>UDP-N-acetyl-alpha-D-glucosamine</name>
        <dbReference type="ChEBI" id="CHEBI:57705"/>
    </ligand>
</feature>
<feature type="binding site" evidence="1">
    <location>
        <position position="351"/>
    </location>
    <ligand>
        <name>UDP-N-acetyl-alpha-D-glucosamine</name>
        <dbReference type="ChEBI" id="CHEBI:57705"/>
    </ligand>
</feature>
<feature type="binding site" evidence="1">
    <location>
        <position position="366"/>
    </location>
    <ligand>
        <name>UDP-N-acetyl-alpha-D-glucosamine</name>
        <dbReference type="ChEBI" id="CHEBI:57705"/>
    </ligand>
</feature>
<feature type="binding site" evidence="1">
    <location>
        <position position="377"/>
    </location>
    <ligand>
        <name>UDP-N-acetyl-alpha-D-glucosamine</name>
        <dbReference type="ChEBI" id="CHEBI:57705"/>
    </ligand>
</feature>
<feature type="binding site" evidence="1">
    <location>
        <position position="380"/>
    </location>
    <ligand>
        <name>acetyl-CoA</name>
        <dbReference type="ChEBI" id="CHEBI:57288"/>
    </ligand>
</feature>
<feature type="binding site" evidence="1">
    <location>
        <begin position="386"/>
        <end position="387"/>
    </location>
    <ligand>
        <name>acetyl-CoA</name>
        <dbReference type="ChEBI" id="CHEBI:57288"/>
    </ligand>
</feature>
<feature type="binding site" evidence="1">
    <location>
        <position position="405"/>
    </location>
    <ligand>
        <name>acetyl-CoA</name>
        <dbReference type="ChEBI" id="CHEBI:57288"/>
    </ligand>
</feature>
<feature type="binding site" evidence="1">
    <location>
        <position position="423"/>
    </location>
    <ligand>
        <name>acetyl-CoA</name>
        <dbReference type="ChEBI" id="CHEBI:57288"/>
    </ligand>
</feature>
<feature type="binding site" evidence="1">
    <location>
        <position position="440"/>
    </location>
    <ligand>
        <name>acetyl-CoA</name>
        <dbReference type="ChEBI" id="CHEBI:57288"/>
    </ligand>
</feature>
<keyword id="KW-0012">Acyltransferase</keyword>
<keyword id="KW-0133">Cell shape</keyword>
<keyword id="KW-0961">Cell wall biogenesis/degradation</keyword>
<keyword id="KW-0963">Cytoplasm</keyword>
<keyword id="KW-0460">Magnesium</keyword>
<keyword id="KW-0479">Metal-binding</keyword>
<keyword id="KW-0511">Multifunctional enzyme</keyword>
<keyword id="KW-0548">Nucleotidyltransferase</keyword>
<keyword id="KW-0573">Peptidoglycan synthesis</keyword>
<keyword id="KW-1185">Reference proteome</keyword>
<keyword id="KW-0677">Repeat</keyword>
<keyword id="KW-0808">Transferase</keyword>
<sequence>MLNNAMSVVILAAGKGTRMYSDLPKVLHTLAGKAMVQHVIDAANELGAAHVHLVYGHGGDLLKQALKDDNLNWVLQAEQLGTGHAMQQAAPFFADDEDILMLYGDVPLISVETLQRLRDAKPQGGIGLLTVKLDDPTGYGRITRENGKVTGIVEHKDATDEQRQIQEINTGILIANGADMKRWLAKLTNNNAQGEYYITDIIALAYQEGREIVAVHPQRLSEVEGVNNRLQLSRLERVYQSEQAEKLLLAGVMLRDPARFDLRGTLTHGRDVEIDTNVIIEGNVTLGHRVKIGTGCVIKNSVIGDDCEISPYTVVEDANLAAACTIGPFARLRPGAELLEGAHVGNFVEMKKARLGKGSKVGHLTYLGDAEIGDNVNIGAGTITCNYDGANKFKTIIGDDVFVGSDTQLVAPVTVGKGATIAAGTTVTRNVGENALAISRVPQTQKEGWRRPVKKK</sequence>
<proteinExistence type="inferred from homology"/>
<organism>
    <name type="scientific">Shigella sonnei (strain Ss046)</name>
    <dbReference type="NCBI Taxonomy" id="300269"/>
    <lineage>
        <taxon>Bacteria</taxon>
        <taxon>Pseudomonadati</taxon>
        <taxon>Pseudomonadota</taxon>
        <taxon>Gammaproteobacteria</taxon>
        <taxon>Enterobacterales</taxon>
        <taxon>Enterobacteriaceae</taxon>
        <taxon>Shigella</taxon>
    </lineage>
</organism>
<reference key="1">
    <citation type="journal article" date="2005" name="Nucleic Acids Res.">
        <title>Genome dynamics and diversity of Shigella species, the etiologic agents of bacillary dysentery.</title>
        <authorList>
            <person name="Yang F."/>
            <person name="Yang J."/>
            <person name="Zhang X."/>
            <person name="Chen L."/>
            <person name="Jiang Y."/>
            <person name="Yan Y."/>
            <person name="Tang X."/>
            <person name="Wang J."/>
            <person name="Xiong Z."/>
            <person name="Dong J."/>
            <person name="Xue Y."/>
            <person name="Zhu Y."/>
            <person name="Xu X."/>
            <person name="Sun L."/>
            <person name="Chen S."/>
            <person name="Nie H."/>
            <person name="Peng J."/>
            <person name="Xu J."/>
            <person name="Wang Y."/>
            <person name="Yuan Z."/>
            <person name="Wen Y."/>
            <person name="Yao Z."/>
            <person name="Shen Y."/>
            <person name="Qiang B."/>
            <person name="Hou Y."/>
            <person name="Yu J."/>
            <person name="Jin Q."/>
        </authorList>
    </citation>
    <scope>NUCLEOTIDE SEQUENCE [LARGE SCALE GENOMIC DNA]</scope>
    <source>
        <strain>Ss046</strain>
    </source>
</reference>
<dbReference type="EC" id="2.7.7.23" evidence="1"/>
<dbReference type="EC" id="2.3.1.157" evidence="1"/>
<dbReference type="EMBL" id="CP000038">
    <property type="protein sequence ID" value="AAZ90428.1"/>
    <property type="molecule type" value="Genomic_DNA"/>
</dbReference>
<dbReference type="RefSeq" id="WP_000933742.1">
    <property type="nucleotide sequence ID" value="NC_007384.1"/>
</dbReference>
<dbReference type="SMR" id="Q3YVN4"/>
<dbReference type="GeneID" id="93778237"/>
<dbReference type="KEGG" id="ssn:SSON_3889"/>
<dbReference type="HOGENOM" id="CLU_029499_15_2_6"/>
<dbReference type="UniPathway" id="UPA00113">
    <property type="reaction ID" value="UER00532"/>
</dbReference>
<dbReference type="UniPathway" id="UPA00113">
    <property type="reaction ID" value="UER00533"/>
</dbReference>
<dbReference type="UniPathway" id="UPA00973"/>
<dbReference type="Proteomes" id="UP000002529">
    <property type="component" value="Chromosome"/>
</dbReference>
<dbReference type="GO" id="GO:0005737">
    <property type="term" value="C:cytoplasm"/>
    <property type="evidence" value="ECO:0007669"/>
    <property type="project" value="UniProtKB-SubCell"/>
</dbReference>
<dbReference type="GO" id="GO:0016020">
    <property type="term" value="C:membrane"/>
    <property type="evidence" value="ECO:0007669"/>
    <property type="project" value="GOC"/>
</dbReference>
<dbReference type="GO" id="GO:0019134">
    <property type="term" value="F:glucosamine-1-phosphate N-acetyltransferase activity"/>
    <property type="evidence" value="ECO:0007669"/>
    <property type="project" value="UniProtKB-UniRule"/>
</dbReference>
<dbReference type="GO" id="GO:0000287">
    <property type="term" value="F:magnesium ion binding"/>
    <property type="evidence" value="ECO:0007669"/>
    <property type="project" value="UniProtKB-UniRule"/>
</dbReference>
<dbReference type="GO" id="GO:0003977">
    <property type="term" value="F:UDP-N-acetylglucosamine diphosphorylase activity"/>
    <property type="evidence" value="ECO:0007669"/>
    <property type="project" value="UniProtKB-UniRule"/>
</dbReference>
<dbReference type="GO" id="GO:0000902">
    <property type="term" value="P:cell morphogenesis"/>
    <property type="evidence" value="ECO:0007669"/>
    <property type="project" value="UniProtKB-UniRule"/>
</dbReference>
<dbReference type="GO" id="GO:0071555">
    <property type="term" value="P:cell wall organization"/>
    <property type="evidence" value="ECO:0007669"/>
    <property type="project" value="UniProtKB-KW"/>
</dbReference>
<dbReference type="GO" id="GO:0009245">
    <property type="term" value="P:lipid A biosynthetic process"/>
    <property type="evidence" value="ECO:0007669"/>
    <property type="project" value="UniProtKB-UniRule"/>
</dbReference>
<dbReference type="GO" id="GO:0009252">
    <property type="term" value="P:peptidoglycan biosynthetic process"/>
    <property type="evidence" value="ECO:0007669"/>
    <property type="project" value="UniProtKB-UniRule"/>
</dbReference>
<dbReference type="GO" id="GO:0008360">
    <property type="term" value="P:regulation of cell shape"/>
    <property type="evidence" value="ECO:0007669"/>
    <property type="project" value="UniProtKB-KW"/>
</dbReference>
<dbReference type="GO" id="GO:0006048">
    <property type="term" value="P:UDP-N-acetylglucosamine biosynthetic process"/>
    <property type="evidence" value="ECO:0007669"/>
    <property type="project" value="UniProtKB-UniPathway"/>
</dbReference>
<dbReference type="CDD" id="cd02540">
    <property type="entry name" value="GT2_GlmU_N_bac"/>
    <property type="match status" value="1"/>
</dbReference>
<dbReference type="CDD" id="cd03353">
    <property type="entry name" value="LbH_GlmU_C"/>
    <property type="match status" value="1"/>
</dbReference>
<dbReference type="FunFam" id="2.160.10.10:FF:000011">
    <property type="entry name" value="Bifunctional protein GlmU"/>
    <property type="match status" value="1"/>
</dbReference>
<dbReference type="FunFam" id="3.90.550.10:FF:000006">
    <property type="entry name" value="Bifunctional protein GlmU"/>
    <property type="match status" value="1"/>
</dbReference>
<dbReference type="Gene3D" id="2.160.10.10">
    <property type="entry name" value="Hexapeptide repeat proteins"/>
    <property type="match status" value="1"/>
</dbReference>
<dbReference type="Gene3D" id="3.90.550.10">
    <property type="entry name" value="Spore Coat Polysaccharide Biosynthesis Protein SpsA, Chain A"/>
    <property type="match status" value="1"/>
</dbReference>
<dbReference type="HAMAP" id="MF_01631">
    <property type="entry name" value="GlmU"/>
    <property type="match status" value="1"/>
</dbReference>
<dbReference type="InterPro" id="IPR005882">
    <property type="entry name" value="Bifunctional_GlmU"/>
</dbReference>
<dbReference type="InterPro" id="IPR050065">
    <property type="entry name" value="GlmU-like"/>
</dbReference>
<dbReference type="InterPro" id="IPR038009">
    <property type="entry name" value="GlmU_C_LbH"/>
</dbReference>
<dbReference type="InterPro" id="IPR001451">
    <property type="entry name" value="Hexapep"/>
</dbReference>
<dbReference type="InterPro" id="IPR018357">
    <property type="entry name" value="Hexapep_transf_CS"/>
</dbReference>
<dbReference type="InterPro" id="IPR025877">
    <property type="entry name" value="MobA-like_NTP_Trfase"/>
</dbReference>
<dbReference type="InterPro" id="IPR029044">
    <property type="entry name" value="Nucleotide-diphossugar_trans"/>
</dbReference>
<dbReference type="InterPro" id="IPR011004">
    <property type="entry name" value="Trimer_LpxA-like_sf"/>
</dbReference>
<dbReference type="NCBIfam" id="TIGR01173">
    <property type="entry name" value="glmU"/>
    <property type="match status" value="1"/>
</dbReference>
<dbReference type="NCBIfam" id="NF006986">
    <property type="entry name" value="PRK09451.1"/>
    <property type="match status" value="1"/>
</dbReference>
<dbReference type="PANTHER" id="PTHR43584:SF3">
    <property type="entry name" value="BIFUNCTIONAL PROTEIN GLMU"/>
    <property type="match status" value="1"/>
</dbReference>
<dbReference type="PANTHER" id="PTHR43584">
    <property type="entry name" value="NUCLEOTIDYL TRANSFERASE"/>
    <property type="match status" value="1"/>
</dbReference>
<dbReference type="Pfam" id="PF00132">
    <property type="entry name" value="Hexapep"/>
    <property type="match status" value="1"/>
</dbReference>
<dbReference type="Pfam" id="PF12804">
    <property type="entry name" value="NTP_transf_3"/>
    <property type="match status" value="1"/>
</dbReference>
<dbReference type="SUPFAM" id="SSF53448">
    <property type="entry name" value="Nucleotide-diphospho-sugar transferases"/>
    <property type="match status" value="1"/>
</dbReference>
<dbReference type="SUPFAM" id="SSF51161">
    <property type="entry name" value="Trimeric LpxA-like enzymes"/>
    <property type="match status" value="1"/>
</dbReference>
<dbReference type="PROSITE" id="PS00101">
    <property type="entry name" value="HEXAPEP_TRANSFERASES"/>
    <property type="match status" value="1"/>
</dbReference>
<name>GLMU_SHISS</name>
<accession>Q3YVN4</accession>
<comment type="function">
    <text evidence="1">Catalyzes the last two sequential reactions in the de novo biosynthetic pathway for UDP-N-acetylglucosamine (UDP-GlcNAc). The C-terminal domain catalyzes the transfer of acetyl group from acetyl coenzyme A to glucosamine-1-phosphate (GlcN-1-P) to produce N-acetylglucosamine-1-phosphate (GlcNAc-1-P), which is converted into UDP-GlcNAc by the transfer of uridine 5-monophosphate (from uridine 5-triphosphate), a reaction catalyzed by the N-terminal domain.</text>
</comment>
<comment type="catalytic activity">
    <reaction evidence="1">
        <text>alpha-D-glucosamine 1-phosphate + acetyl-CoA = N-acetyl-alpha-D-glucosamine 1-phosphate + CoA + H(+)</text>
        <dbReference type="Rhea" id="RHEA:13725"/>
        <dbReference type="ChEBI" id="CHEBI:15378"/>
        <dbReference type="ChEBI" id="CHEBI:57287"/>
        <dbReference type="ChEBI" id="CHEBI:57288"/>
        <dbReference type="ChEBI" id="CHEBI:57776"/>
        <dbReference type="ChEBI" id="CHEBI:58516"/>
        <dbReference type="EC" id="2.3.1.157"/>
    </reaction>
</comment>
<comment type="catalytic activity">
    <reaction evidence="1">
        <text>N-acetyl-alpha-D-glucosamine 1-phosphate + UTP + H(+) = UDP-N-acetyl-alpha-D-glucosamine + diphosphate</text>
        <dbReference type="Rhea" id="RHEA:13509"/>
        <dbReference type="ChEBI" id="CHEBI:15378"/>
        <dbReference type="ChEBI" id="CHEBI:33019"/>
        <dbReference type="ChEBI" id="CHEBI:46398"/>
        <dbReference type="ChEBI" id="CHEBI:57705"/>
        <dbReference type="ChEBI" id="CHEBI:57776"/>
        <dbReference type="EC" id="2.7.7.23"/>
    </reaction>
</comment>
<comment type="cofactor">
    <cofactor evidence="1">
        <name>Mg(2+)</name>
        <dbReference type="ChEBI" id="CHEBI:18420"/>
    </cofactor>
    <text evidence="1">Binds 1 Mg(2+) ion per subunit.</text>
</comment>
<comment type="pathway">
    <text evidence="1">Nucleotide-sugar biosynthesis; UDP-N-acetyl-alpha-D-glucosamine biosynthesis; N-acetyl-alpha-D-glucosamine 1-phosphate from alpha-D-glucosamine 6-phosphate (route II): step 2/2.</text>
</comment>
<comment type="pathway">
    <text evidence="1">Nucleotide-sugar biosynthesis; UDP-N-acetyl-alpha-D-glucosamine biosynthesis; UDP-N-acetyl-alpha-D-glucosamine from N-acetyl-alpha-D-glucosamine 1-phosphate: step 1/1.</text>
</comment>
<comment type="pathway">
    <text evidence="1">Bacterial outer membrane biogenesis; LPS lipid A biosynthesis.</text>
</comment>
<comment type="subunit">
    <text evidence="1">Homotrimer.</text>
</comment>
<comment type="subcellular location">
    <subcellularLocation>
        <location evidence="1">Cytoplasm</location>
    </subcellularLocation>
</comment>
<comment type="similarity">
    <text evidence="1">In the N-terminal section; belongs to the N-acetylglucosamine-1-phosphate uridyltransferase family.</text>
</comment>
<comment type="similarity">
    <text evidence="1">In the C-terminal section; belongs to the transferase hexapeptide repeat family.</text>
</comment>
<protein>
    <recommendedName>
        <fullName evidence="1">Bifunctional protein GlmU</fullName>
    </recommendedName>
    <domain>
        <recommendedName>
            <fullName evidence="1">UDP-N-acetylglucosamine pyrophosphorylase</fullName>
            <ecNumber evidence="1">2.7.7.23</ecNumber>
        </recommendedName>
        <alternativeName>
            <fullName evidence="1">N-acetylglucosamine-1-phosphate uridyltransferase</fullName>
        </alternativeName>
    </domain>
    <domain>
        <recommendedName>
            <fullName evidence="1">Glucosamine-1-phosphate N-acetyltransferase</fullName>
            <ecNumber evidence="1">2.3.1.157</ecNumber>
        </recommendedName>
    </domain>
</protein>
<gene>
    <name evidence="1" type="primary">glmU</name>
    <name type="ordered locus">SSON_3889</name>
</gene>
<evidence type="ECO:0000255" key="1">
    <source>
        <dbReference type="HAMAP-Rule" id="MF_01631"/>
    </source>
</evidence>